<gene>
    <name evidence="1" type="primary">truB</name>
    <name type="ordered locus">Ava_4983</name>
</gene>
<reference key="1">
    <citation type="journal article" date="2014" name="Stand. Genomic Sci.">
        <title>Complete genome sequence of Anabaena variabilis ATCC 29413.</title>
        <authorList>
            <person name="Thiel T."/>
            <person name="Pratte B.S."/>
            <person name="Zhong J."/>
            <person name="Goodwin L."/>
            <person name="Copeland A."/>
            <person name="Lucas S."/>
            <person name="Han C."/>
            <person name="Pitluck S."/>
            <person name="Land M.L."/>
            <person name="Kyrpides N.C."/>
            <person name="Woyke T."/>
        </authorList>
    </citation>
    <scope>NUCLEOTIDE SEQUENCE [LARGE SCALE GENOMIC DNA]</scope>
    <source>
        <strain>ATCC 29413 / PCC 7937</strain>
    </source>
</reference>
<accession>Q3M356</accession>
<feature type="chain" id="PRO_0000229340" description="tRNA pseudouridine synthase B">
    <location>
        <begin position="1"/>
        <end position="293"/>
    </location>
</feature>
<feature type="active site" description="Nucleophile" evidence="1">
    <location>
        <position position="38"/>
    </location>
</feature>
<sequence length="293" mass="31849">MQGFINLDKPFGWTSHDCVARLRKMLRLKRVGHAGTLDPAATGVLPIAVGKATRLLQYLPSDKAYKATVRFGVQTTTDDLQGEIISSQPCGGLSLSEVKTSLSQFIGKIEQIPPIYSAIQVEGKRLYDLARKGETIEVPARTVEVFSIDVLDWREGDFPELDVAIACGSGTYIRAIARDLGAIFHTGGTLAALIRTHSSGFNLTDSLTLTDLETQLQAGTFEPTPADAALQYLPSVTLPSISAQKWCQGQRIELNLETVGKVRVYQAETNIFLGIGELQTGVLIPQMVFEPIS</sequence>
<comment type="function">
    <text evidence="1">Responsible for synthesis of pseudouridine from uracil-55 in the psi GC loop of transfer RNAs.</text>
</comment>
<comment type="catalytic activity">
    <reaction evidence="1">
        <text>uridine(55) in tRNA = pseudouridine(55) in tRNA</text>
        <dbReference type="Rhea" id="RHEA:42532"/>
        <dbReference type="Rhea" id="RHEA-COMP:10101"/>
        <dbReference type="Rhea" id="RHEA-COMP:10102"/>
        <dbReference type="ChEBI" id="CHEBI:65314"/>
        <dbReference type="ChEBI" id="CHEBI:65315"/>
        <dbReference type="EC" id="5.4.99.25"/>
    </reaction>
</comment>
<comment type="similarity">
    <text evidence="1">Belongs to the pseudouridine synthase TruB family. Type 1 subfamily.</text>
</comment>
<name>TRUB_TRIV2</name>
<organism>
    <name type="scientific">Trichormus variabilis (strain ATCC 29413 / PCC 7937)</name>
    <name type="common">Anabaena variabilis</name>
    <dbReference type="NCBI Taxonomy" id="240292"/>
    <lineage>
        <taxon>Bacteria</taxon>
        <taxon>Bacillati</taxon>
        <taxon>Cyanobacteriota</taxon>
        <taxon>Cyanophyceae</taxon>
        <taxon>Nostocales</taxon>
        <taxon>Nostocaceae</taxon>
        <taxon>Trichormus</taxon>
    </lineage>
</organism>
<protein>
    <recommendedName>
        <fullName evidence="1">tRNA pseudouridine synthase B</fullName>
        <ecNumber evidence="1">5.4.99.25</ecNumber>
    </recommendedName>
    <alternativeName>
        <fullName evidence="1">tRNA pseudouridine(55) synthase</fullName>
        <shortName evidence="1">Psi55 synthase</shortName>
    </alternativeName>
    <alternativeName>
        <fullName evidence="1">tRNA pseudouridylate synthase</fullName>
    </alternativeName>
    <alternativeName>
        <fullName evidence="1">tRNA-uridine isomerase</fullName>
    </alternativeName>
</protein>
<keyword id="KW-0413">Isomerase</keyword>
<keyword id="KW-0819">tRNA processing</keyword>
<evidence type="ECO:0000255" key="1">
    <source>
        <dbReference type="HAMAP-Rule" id="MF_01080"/>
    </source>
</evidence>
<dbReference type="EC" id="5.4.99.25" evidence="1"/>
<dbReference type="EMBL" id="CP000117">
    <property type="protein sequence ID" value="ABA24580.1"/>
    <property type="molecule type" value="Genomic_DNA"/>
</dbReference>
<dbReference type="SMR" id="Q3M356"/>
<dbReference type="STRING" id="240292.Ava_4983"/>
<dbReference type="KEGG" id="ava:Ava_4983"/>
<dbReference type="eggNOG" id="COG0130">
    <property type="taxonomic scope" value="Bacteria"/>
</dbReference>
<dbReference type="HOGENOM" id="CLU_032087_0_0_3"/>
<dbReference type="Proteomes" id="UP000002533">
    <property type="component" value="Chromosome"/>
</dbReference>
<dbReference type="GO" id="GO:0003723">
    <property type="term" value="F:RNA binding"/>
    <property type="evidence" value="ECO:0007669"/>
    <property type="project" value="InterPro"/>
</dbReference>
<dbReference type="GO" id="GO:0160148">
    <property type="term" value="F:tRNA pseudouridine(55) synthase activity"/>
    <property type="evidence" value="ECO:0007669"/>
    <property type="project" value="UniProtKB-EC"/>
</dbReference>
<dbReference type="GO" id="GO:1990481">
    <property type="term" value="P:mRNA pseudouridine synthesis"/>
    <property type="evidence" value="ECO:0007669"/>
    <property type="project" value="TreeGrafter"/>
</dbReference>
<dbReference type="GO" id="GO:0031119">
    <property type="term" value="P:tRNA pseudouridine synthesis"/>
    <property type="evidence" value="ECO:0007669"/>
    <property type="project" value="UniProtKB-UniRule"/>
</dbReference>
<dbReference type="CDD" id="cd02573">
    <property type="entry name" value="PseudoU_synth_EcTruB"/>
    <property type="match status" value="1"/>
</dbReference>
<dbReference type="CDD" id="cd21152">
    <property type="entry name" value="PUA_TruB_bacterial"/>
    <property type="match status" value="1"/>
</dbReference>
<dbReference type="Gene3D" id="3.30.2350.10">
    <property type="entry name" value="Pseudouridine synthase"/>
    <property type="match status" value="1"/>
</dbReference>
<dbReference type="Gene3D" id="2.30.130.10">
    <property type="entry name" value="PUA domain"/>
    <property type="match status" value="1"/>
</dbReference>
<dbReference type="HAMAP" id="MF_01080">
    <property type="entry name" value="TruB_bact"/>
    <property type="match status" value="1"/>
</dbReference>
<dbReference type="InterPro" id="IPR020103">
    <property type="entry name" value="PsdUridine_synth_cat_dom_sf"/>
</dbReference>
<dbReference type="InterPro" id="IPR002501">
    <property type="entry name" value="PsdUridine_synth_N"/>
</dbReference>
<dbReference type="InterPro" id="IPR015947">
    <property type="entry name" value="PUA-like_sf"/>
</dbReference>
<dbReference type="InterPro" id="IPR036974">
    <property type="entry name" value="PUA_sf"/>
</dbReference>
<dbReference type="InterPro" id="IPR014780">
    <property type="entry name" value="tRNA_psdUridine_synth_TruB"/>
</dbReference>
<dbReference type="InterPro" id="IPR015240">
    <property type="entry name" value="tRNA_sdUridine_synth_fam1_C"/>
</dbReference>
<dbReference type="NCBIfam" id="TIGR00431">
    <property type="entry name" value="TruB"/>
    <property type="match status" value="1"/>
</dbReference>
<dbReference type="PANTHER" id="PTHR13767:SF2">
    <property type="entry name" value="PSEUDOURIDYLATE SYNTHASE TRUB1"/>
    <property type="match status" value="1"/>
</dbReference>
<dbReference type="PANTHER" id="PTHR13767">
    <property type="entry name" value="TRNA-PSEUDOURIDINE SYNTHASE"/>
    <property type="match status" value="1"/>
</dbReference>
<dbReference type="Pfam" id="PF09157">
    <property type="entry name" value="TruB-C_2"/>
    <property type="match status" value="1"/>
</dbReference>
<dbReference type="Pfam" id="PF01509">
    <property type="entry name" value="TruB_N"/>
    <property type="match status" value="1"/>
</dbReference>
<dbReference type="SUPFAM" id="SSF55120">
    <property type="entry name" value="Pseudouridine synthase"/>
    <property type="match status" value="1"/>
</dbReference>
<dbReference type="SUPFAM" id="SSF88697">
    <property type="entry name" value="PUA domain-like"/>
    <property type="match status" value="1"/>
</dbReference>
<proteinExistence type="inferred from homology"/>